<dbReference type="EC" id="4.1.3.40" evidence="1"/>
<dbReference type="EMBL" id="CP000058">
    <property type="protein sequence ID" value="AAZ35280.1"/>
    <property type="molecule type" value="Genomic_DNA"/>
</dbReference>
<dbReference type="RefSeq" id="WP_004666596.1">
    <property type="nucleotide sequence ID" value="NC_005773.3"/>
</dbReference>
<dbReference type="SMR" id="Q48BQ6"/>
<dbReference type="KEGG" id="psp:PSPPH_5112"/>
<dbReference type="eggNOG" id="COG3161">
    <property type="taxonomic scope" value="Bacteria"/>
</dbReference>
<dbReference type="HOGENOM" id="CLU_096824_3_0_6"/>
<dbReference type="UniPathway" id="UPA00232"/>
<dbReference type="Proteomes" id="UP000000551">
    <property type="component" value="Chromosome"/>
</dbReference>
<dbReference type="GO" id="GO:0005829">
    <property type="term" value="C:cytosol"/>
    <property type="evidence" value="ECO:0007669"/>
    <property type="project" value="TreeGrafter"/>
</dbReference>
<dbReference type="GO" id="GO:0008813">
    <property type="term" value="F:chorismate lyase activity"/>
    <property type="evidence" value="ECO:0007669"/>
    <property type="project" value="UniProtKB-UniRule"/>
</dbReference>
<dbReference type="GO" id="GO:0042866">
    <property type="term" value="P:pyruvate biosynthetic process"/>
    <property type="evidence" value="ECO:0007669"/>
    <property type="project" value="UniProtKB-UniRule"/>
</dbReference>
<dbReference type="GO" id="GO:0006744">
    <property type="term" value="P:ubiquinone biosynthetic process"/>
    <property type="evidence" value="ECO:0007669"/>
    <property type="project" value="UniProtKB-UniRule"/>
</dbReference>
<dbReference type="Gene3D" id="3.40.1410.10">
    <property type="entry name" value="Chorismate lyase-like"/>
    <property type="match status" value="1"/>
</dbReference>
<dbReference type="HAMAP" id="MF_01632">
    <property type="entry name" value="UbiC"/>
    <property type="match status" value="1"/>
</dbReference>
<dbReference type="InterPro" id="IPR007440">
    <property type="entry name" value="Chorismate--pyruvate_lyase"/>
</dbReference>
<dbReference type="InterPro" id="IPR028978">
    <property type="entry name" value="Chorismate_lyase_/UTRA_dom_sf"/>
</dbReference>
<dbReference type="PANTHER" id="PTHR38683">
    <property type="entry name" value="CHORISMATE PYRUVATE-LYASE"/>
    <property type="match status" value="1"/>
</dbReference>
<dbReference type="PANTHER" id="PTHR38683:SF1">
    <property type="entry name" value="CHORISMATE PYRUVATE-LYASE"/>
    <property type="match status" value="1"/>
</dbReference>
<dbReference type="Pfam" id="PF04345">
    <property type="entry name" value="Chor_lyase"/>
    <property type="match status" value="1"/>
</dbReference>
<dbReference type="SUPFAM" id="SSF64288">
    <property type="entry name" value="Chorismate lyase-like"/>
    <property type="match status" value="1"/>
</dbReference>
<keyword id="KW-0963">Cytoplasm</keyword>
<keyword id="KW-0456">Lyase</keyword>
<keyword id="KW-0670">Pyruvate</keyword>
<keyword id="KW-0831">Ubiquinone biosynthesis</keyword>
<protein>
    <recommendedName>
        <fullName evidence="1">Probable chorismate pyruvate-lyase</fullName>
        <shortName evidence="1">CL</shortName>
        <shortName evidence="1">CPL</shortName>
        <ecNumber evidence="1">4.1.3.40</ecNumber>
    </recommendedName>
</protein>
<organism>
    <name type="scientific">Pseudomonas savastanoi pv. phaseolicola (strain 1448A / Race 6)</name>
    <name type="common">Pseudomonas syringae pv. phaseolicola (strain 1448A / Race 6)</name>
    <dbReference type="NCBI Taxonomy" id="264730"/>
    <lineage>
        <taxon>Bacteria</taxon>
        <taxon>Pseudomonadati</taxon>
        <taxon>Pseudomonadota</taxon>
        <taxon>Gammaproteobacteria</taxon>
        <taxon>Pseudomonadales</taxon>
        <taxon>Pseudomonadaceae</taxon>
        <taxon>Pseudomonas</taxon>
    </lineage>
</organism>
<reference key="1">
    <citation type="journal article" date="2005" name="J. Bacteriol.">
        <title>Whole-genome sequence analysis of Pseudomonas syringae pv. phaseolicola 1448A reveals divergence among pathovars in genes involved in virulence and transposition.</title>
        <authorList>
            <person name="Joardar V."/>
            <person name="Lindeberg M."/>
            <person name="Jackson R.W."/>
            <person name="Selengut J."/>
            <person name="Dodson R."/>
            <person name="Brinkac L.M."/>
            <person name="Daugherty S.C."/>
            <person name="DeBoy R.T."/>
            <person name="Durkin A.S."/>
            <person name="Gwinn Giglio M."/>
            <person name="Madupu R."/>
            <person name="Nelson W.C."/>
            <person name="Rosovitz M.J."/>
            <person name="Sullivan S.A."/>
            <person name="Crabtree J."/>
            <person name="Creasy T."/>
            <person name="Davidsen T.M."/>
            <person name="Haft D.H."/>
            <person name="Zafar N."/>
            <person name="Zhou L."/>
            <person name="Halpin R."/>
            <person name="Holley T."/>
            <person name="Khouri H.M."/>
            <person name="Feldblyum T.V."/>
            <person name="White O."/>
            <person name="Fraser C.M."/>
            <person name="Chatterjee A.K."/>
            <person name="Cartinhour S."/>
            <person name="Schneider D."/>
            <person name="Mansfield J.W."/>
            <person name="Collmer A."/>
            <person name="Buell R."/>
        </authorList>
    </citation>
    <scope>NUCLEOTIDE SEQUENCE [LARGE SCALE GENOMIC DNA]</scope>
    <source>
        <strain>1448A / Race 6</strain>
    </source>
</reference>
<comment type="function">
    <text evidence="1">Removes the pyruvyl group from chorismate, with concomitant aromatization of the ring, to provide 4-hydroxybenzoate (4HB) for the ubiquinone pathway.</text>
</comment>
<comment type="catalytic activity">
    <reaction evidence="1">
        <text>chorismate = 4-hydroxybenzoate + pyruvate</text>
        <dbReference type="Rhea" id="RHEA:16505"/>
        <dbReference type="ChEBI" id="CHEBI:15361"/>
        <dbReference type="ChEBI" id="CHEBI:17879"/>
        <dbReference type="ChEBI" id="CHEBI:29748"/>
        <dbReference type="EC" id="4.1.3.40"/>
    </reaction>
</comment>
<comment type="pathway">
    <text evidence="1">Cofactor biosynthesis; ubiquinone biosynthesis.</text>
</comment>
<comment type="subcellular location">
    <subcellularLocation>
        <location evidence="1">Cytoplasm</location>
    </subcellularLocation>
</comment>
<comment type="similarity">
    <text evidence="1">Belongs to the UbiC family.</text>
</comment>
<gene>
    <name evidence="1" type="primary">ubiC</name>
    <name type="ordered locus">PSPPH_5112</name>
</gene>
<proteinExistence type="inferred from homology"/>
<feature type="chain" id="PRO_0000240561" description="Probable chorismate pyruvate-lyase">
    <location>
        <begin position="1"/>
        <end position="186"/>
    </location>
</feature>
<feature type="binding site" evidence="1">
    <location>
        <position position="80"/>
    </location>
    <ligand>
        <name>substrate</name>
    </ligand>
</feature>
<feature type="binding site" evidence="1">
    <location>
        <position position="118"/>
    </location>
    <ligand>
        <name>substrate</name>
    </ligand>
</feature>
<feature type="binding site" evidence="1">
    <location>
        <position position="170"/>
    </location>
    <ligand>
        <name>substrate</name>
    </ligand>
</feature>
<sequence>MTQQSPAFISPIWLKREQLIDVPEPIMLDWLFNQDSLTRRLDRLSDGGFSVFPQFEGWQALRRDECLALGLPLASEGWVREVYLCGNDSNWVFARSVAARSALQDGGLNMDELGTRSLGELLFSDPAFARGTLEVCHYPEAWLPDAVAARGLWARRSRFSRGALSVLVAEVFLPALCNTIHDKDPV</sequence>
<evidence type="ECO:0000255" key="1">
    <source>
        <dbReference type="HAMAP-Rule" id="MF_01632"/>
    </source>
</evidence>
<name>UBIC_PSE14</name>
<accession>Q48BQ6</accession>